<accession>A5PK51</accession>
<accession>Q6XQN3</accession>
<comment type="function">
    <text evidence="3">Catalyzes the first step in the biosynthesis of NAD from nicotinic acid, the ATP-dependent synthesis of beta-nicotinate D-ribonucleotide from nicotinate and 5-phospho-D-ribose 1-phosphate. Helps prevent cellular oxidative stress via its role in NAD biosynthesis.</text>
</comment>
<comment type="catalytic activity">
    <reaction evidence="3">
        <text>nicotinate + 5-phospho-alpha-D-ribose 1-diphosphate + ATP + H2O = nicotinate beta-D-ribonucleotide + ADP + phosphate + diphosphate</text>
        <dbReference type="Rhea" id="RHEA:36163"/>
        <dbReference type="ChEBI" id="CHEBI:15377"/>
        <dbReference type="ChEBI" id="CHEBI:30616"/>
        <dbReference type="ChEBI" id="CHEBI:32544"/>
        <dbReference type="ChEBI" id="CHEBI:33019"/>
        <dbReference type="ChEBI" id="CHEBI:43474"/>
        <dbReference type="ChEBI" id="CHEBI:57502"/>
        <dbReference type="ChEBI" id="CHEBI:58017"/>
        <dbReference type="ChEBI" id="CHEBI:456216"/>
        <dbReference type="EC" id="6.3.4.21"/>
    </reaction>
</comment>
<comment type="cofactor">
    <cofactor evidence="3">
        <name>Mg(2+)</name>
        <dbReference type="ChEBI" id="CHEBI:18420"/>
    </cofactor>
    <cofactor evidence="3">
        <name>Mn(2+)</name>
        <dbReference type="ChEBI" id="CHEBI:29035"/>
    </cofactor>
    <text evidence="3">Activity is highest with Mn(2+).</text>
</comment>
<comment type="pathway">
    <text evidence="3">Cofactor biosynthesis; NAD(+) biosynthesis; nicotinate D-ribonucleotide from nicotinate: step 1/1.</text>
</comment>
<comment type="subunit">
    <text evidence="3">Homodimer.</text>
</comment>
<comment type="subcellular location">
    <subcellularLocation>
        <location evidence="1">Cytoplasm</location>
        <location evidence="1">Cytosol</location>
    </subcellularLocation>
</comment>
<comment type="alternative products">
    <event type="alternative splicing"/>
    <isoform>
        <id>A5PK51-1</id>
        <name>1</name>
        <sequence type="displayed"/>
    </isoform>
    <isoform>
        <id>A5PK51-2</id>
        <name>2</name>
        <sequence type="described" ref="VSP_030609"/>
    </isoform>
</comment>
<comment type="PTM">
    <text evidence="2">Transiently phosphorylated on a His residue during the reaction cycle. Phosphorylation strongly increases the affinity for substrates and increases the rate of nicotinate D-ribonucleotide production. Dephosphorylation regenerates the low-affinity form of the enzyme, leading to product release.</text>
</comment>
<comment type="similarity">
    <text evidence="6">Belongs to the NAPRTase family.</text>
</comment>
<organism>
    <name type="scientific">Bos taurus</name>
    <name type="common">Bovine</name>
    <dbReference type="NCBI Taxonomy" id="9913"/>
    <lineage>
        <taxon>Eukaryota</taxon>
        <taxon>Metazoa</taxon>
        <taxon>Chordata</taxon>
        <taxon>Craniata</taxon>
        <taxon>Vertebrata</taxon>
        <taxon>Euteleostomi</taxon>
        <taxon>Mammalia</taxon>
        <taxon>Eutheria</taxon>
        <taxon>Laurasiatheria</taxon>
        <taxon>Artiodactyla</taxon>
        <taxon>Ruminantia</taxon>
        <taxon>Pecora</taxon>
        <taxon>Bovidae</taxon>
        <taxon>Bovinae</taxon>
        <taxon>Bos</taxon>
    </lineage>
</organism>
<keyword id="KW-0025">Alternative splicing</keyword>
<keyword id="KW-0963">Cytoplasm</keyword>
<keyword id="KW-0436">Ligase</keyword>
<keyword id="KW-0460">Magnesium</keyword>
<keyword id="KW-0464">Manganese</keyword>
<keyword id="KW-0479">Metal-binding</keyword>
<keyword id="KW-0597">Phosphoprotein</keyword>
<keyword id="KW-0662">Pyridine nucleotide biosynthesis</keyword>
<keyword id="KW-1185">Reference proteome</keyword>
<keyword id="KW-0808">Transferase</keyword>
<gene>
    <name type="primary">NAPRT</name>
    <name type="synonym">NAPRT1</name>
</gene>
<reference key="1">
    <citation type="submission" date="2007-06" db="EMBL/GenBank/DDBJ databases">
        <authorList>
            <consortium name="NIH - Mammalian Gene Collection (MGC) project"/>
        </authorList>
    </citation>
    <scope>NUCLEOTIDE SEQUENCE [LARGE SCALE MRNA] (ISOFORM 2)</scope>
    <source>
        <strain>Crossbred X Angus</strain>
        <tissue>Ileum</tissue>
    </source>
</reference>
<reference key="2">
    <citation type="submission" date="2003-01" db="EMBL/GenBank/DDBJ databases">
        <title>Sequence analysis and molecular evolution of the eukaryotic nicotinate phosphoribosyltransferase family.</title>
        <authorList>
            <person name="Huang C.-H."/>
            <person name="Peng J."/>
            <person name="Chen Y."/>
        </authorList>
    </citation>
    <scope>NUCLEOTIDE SEQUENCE [MRNA] OF 17-538 (ISOFORM 1)</scope>
</reference>
<name>PNCB_BOVIN</name>
<sequence>MAAEQDPEGRAAARPLLTDLYQATMALGYWRAGRAQDQAEFELFFRQCPFGGAFALAAGLRDCVRFLRAFRLRDADVQFLASALPPDTDPAFFEHLRALDCSGVTVRALPEGSLAFPGVPLLQVSGPLLVVQLLETPLLCLVSYASLIATNAARLRLIAGPDKRLLEMGLRRAQGPDGGLTASTYSYLGGFDASSNVLAGQLRGVPVAGTLAHSFVTSFSGSEVPPDPMLAPAAGQGSQVDLAASVEMWLERVCGHLGLGVQEPHRGERAAFVAYALAFPRAFQGLLDTYSVRRSGLPNFLAVALALQELGYQAVGVRLDSGDLLQQAREIRGVFRTAAAQFGVPWLQSVPIAVSNNIDEEELARLAQKGSEVNVIGIGTSVVTCPRQPSLGCVYKLVSVGGQPRMKLTEDPEKQTLPGSKAAFRLLGSDGSLLLDVLQLAEEPPPQAGQELRVWPRGARESRTVRPAHVEPLLRLWVQQGQLCEPLPSLAESRAFAQQSLHRLSPAHRRLEQPALYQVALSEKLQALVDRLSARGAL</sequence>
<proteinExistence type="evidence at transcript level"/>
<evidence type="ECO:0000250" key="1"/>
<evidence type="ECO:0000250" key="2">
    <source>
        <dbReference type="UniProtKB" id="P22253"/>
    </source>
</evidence>
<evidence type="ECO:0000250" key="3">
    <source>
        <dbReference type="UniProtKB" id="Q6XQN6"/>
    </source>
</evidence>
<evidence type="ECO:0000250" key="4">
    <source>
        <dbReference type="UniProtKB" id="Q9HJ28"/>
    </source>
</evidence>
<evidence type="ECO:0000303" key="5">
    <source ref="1"/>
</evidence>
<evidence type="ECO:0000305" key="6"/>
<feature type="chain" id="PRO_0000315680" description="Nicotinate phosphoribosyltransferase">
    <location>
        <begin position="1"/>
        <end position="538"/>
    </location>
</feature>
<feature type="binding site" evidence="4">
    <location>
        <position position="21"/>
    </location>
    <ligand>
        <name>nicotinate</name>
        <dbReference type="ChEBI" id="CHEBI:32544"/>
    </ligand>
</feature>
<feature type="binding site" evidence="4">
    <location>
        <position position="210"/>
    </location>
    <ligand>
        <name>nicotinate</name>
        <dbReference type="ChEBI" id="CHEBI:32544"/>
    </ligand>
</feature>
<feature type="binding site" evidence="4">
    <location>
        <position position="318"/>
    </location>
    <ligand>
        <name>nicotinate</name>
        <dbReference type="ChEBI" id="CHEBI:32544"/>
    </ligand>
</feature>
<feature type="binding site" evidence="4">
    <location>
        <position position="380"/>
    </location>
    <ligand>
        <name>5-phospho-alpha-D-ribose 1-diphosphate</name>
        <dbReference type="ChEBI" id="CHEBI:58017"/>
    </ligand>
</feature>
<feature type="modified residue" description="Phosphohistidine" evidence="2">
    <location>
        <position position="213"/>
    </location>
</feature>
<feature type="splice variant" id="VSP_030609" description="In isoform 2." evidence="5">
    <location>
        <begin position="431"/>
        <end position="435"/>
    </location>
</feature>
<feature type="sequence conflict" description="In Ref. 2; AAP69606." evidence="6" ref="2">
    <original>A</original>
    <variation>E</variation>
    <location>
        <position position="58"/>
    </location>
</feature>
<dbReference type="EC" id="6.3.4.21" evidence="3"/>
<dbReference type="EMBL" id="BC142357">
    <property type="protein sequence ID" value="AAI42358.1"/>
    <property type="molecule type" value="mRNA"/>
</dbReference>
<dbReference type="EMBL" id="AY214328">
    <property type="protein sequence ID" value="AAP69606.1"/>
    <property type="molecule type" value="mRNA"/>
</dbReference>
<dbReference type="RefSeq" id="NP_001092327.1">
    <molecule id="A5PK51-2"/>
    <property type="nucleotide sequence ID" value="NM_001098857.3"/>
</dbReference>
<dbReference type="SMR" id="A5PK51"/>
<dbReference type="FunCoup" id="A5PK51">
    <property type="interactions" value="647"/>
</dbReference>
<dbReference type="STRING" id="9913.ENSBTAP00000065613"/>
<dbReference type="PaxDb" id="9913-ENSBTAP00000019496"/>
<dbReference type="PeptideAtlas" id="A5PK51"/>
<dbReference type="GeneID" id="399559"/>
<dbReference type="KEGG" id="bta:399559"/>
<dbReference type="CTD" id="93100"/>
<dbReference type="eggNOG" id="KOG2511">
    <property type="taxonomic scope" value="Eukaryota"/>
</dbReference>
<dbReference type="InParanoid" id="A5PK51"/>
<dbReference type="OrthoDB" id="193380at2759"/>
<dbReference type="UniPathway" id="UPA00253">
    <property type="reaction ID" value="UER00457"/>
</dbReference>
<dbReference type="Proteomes" id="UP000009136">
    <property type="component" value="Unplaced"/>
</dbReference>
<dbReference type="GO" id="GO:0005829">
    <property type="term" value="C:cytosol"/>
    <property type="evidence" value="ECO:0000318"/>
    <property type="project" value="GO_Central"/>
</dbReference>
<dbReference type="GO" id="GO:0046872">
    <property type="term" value="F:metal ion binding"/>
    <property type="evidence" value="ECO:0007669"/>
    <property type="project" value="UniProtKB-KW"/>
</dbReference>
<dbReference type="GO" id="GO:0004516">
    <property type="term" value="F:nicotinate phosphoribosyltransferase activity"/>
    <property type="evidence" value="ECO:0000318"/>
    <property type="project" value="GO_Central"/>
</dbReference>
<dbReference type="GO" id="GO:0016740">
    <property type="term" value="F:transferase activity"/>
    <property type="evidence" value="ECO:0007669"/>
    <property type="project" value="UniProtKB-KW"/>
</dbReference>
<dbReference type="GO" id="GO:0034355">
    <property type="term" value="P:NAD biosynthetic process via the salvage pathway"/>
    <property type="evidence" value="ECO:0000318"/>
    <property type="project" value="GO_Central"/>
</dbReference>
<dbReference type="CDD" id="cd01570">
    <property type="entry name" value="NAPRTase_A"/>
    <property type="match status" value="1"/>
</dbReference>
<dbReference type="FunFam" id="3.20.140.10:FF:000005">
    <property type="entry name" value="Nicotinate phosphoribosyltransferase"/>
    <property type="match status" value="1"/>
</dbReference>
<dbReference type="FunFam" id="3.20.140.10:FF:000007">
    <property type="entry name" value="Nicotinate phosphoribosyltransferase"/>
    <property type="match status" value="1"/>
</dbReference>
<dbReference type="FunFam" id="3.20.20.70:FF:000126">
    <property type="entry name" value="Nicotinate phosphoribosyltransferase"/>
    <property type="match status" value="1"/>
</dbReference>
<dbReference type="FunFam" id="3.20.20.70:FF:000155">
    <property type="entry name" value="Nicotinate phosphoribosyltransferase"/>
    <property type="match status" value="1"/>
</dbReference>
<dbReference type="Gene3D" id="3.20.20.70">
    <property type="entry name" value="Aldolase class I"/>
    <property type="match status" value="1"/>
</dbReference>
<dbReference type="Gene3D" id="3.20.140.10">
    <property type="entry name" value="nicotinate phosphoribosyltransferase"/>
    <property type="match status" value="2"/>
</dbReference>
<dbReference type="InterPro" id="IPR013785">
    <property type="entry name" value="Aldolase_TIM"/>
</dbReference>
<dbReference type="InterPro" id="IPR041619">
    <property type="entry name" value="NAPRTase_C"/>
</dbReference>
<dbReference type="InterPro" id="IPR040727">
    <property type="entry name" value="NAPRTase_N"/>
</dbReference>
<dbReference type="InterPro" id="IPR007229">
    <property type="entry name" value="Nic_PRibTrfase-Fam"/>
</dbReference>
<dbReference type="InterPro" id="IPR006405">
    <property type="entry name" value="Nic_PRibTrfase_pncB"/>
</dbReference>
<dbReference type="InterPro" id="IPR036068">
    <property type="entry name" value="Nicotinate_pribotase-like_C"/>
</dbReference>
<dbReference type="NCBIfam" id="TIGR01513">
    <property type="entry name" value="NAPRTase_put"/>
    <property type="match status" value="1"/>
</dbReference>
<dbReference type="PANTHER" id="PTHR11098">
    <property type="entry name" value="NICOTINATE PHOSPHORIBOSYLTRANSFERASE"/>
    <property type="match status" value="1"/>
</dbReference>
<dbReference type="PANTHER" id="PTHR11098:SF1">
    <property type="entry name" value="NICOTINATE PHOSPHORIBOSYLTRANSFERASE"/>
    <property type="match status" value="1"/>
</dbReference>
<dbReference type="Pfam" id="PF17956">
    <property type="entry name" value="NAPRTase_C"/>
    <property type="match status" value="1"/>
</dbReference>
<dbReference type="Pfam" id="PF17767">
    <property type="entry name" value="NAPRTase_N"/>
    <property type="match status" value="1"/>
</dbReference>
<dbReference type="PIRSF" id="PIRSF000484">
    <property type="entry name" value="NAPRT"/>
    <property type="match status" value="1"/>
</dbReference>
<dbReference type="SUPFAM" id="SSF51690">
    <property type="entry name" value="Nicotinate/Quinolinate PRTase C-terminal domain-like"/>
    <property type="match status" value="1"/>
</dbReference>
<dbReference type="SUPFAM" id="SSF54675">
    <property type="entry name" value="Nicotinate/Quinolinate PRTase N-terminal domain-like"/>
    <property type="match status" value="1"/>
</dbReference>
<protein>
    <recommendedName>
        <fullName>Nicotinate phosphoribosyltransferase</fullName>
        <shortName evidence="3">NAPRTase</shortName>
        <ecNumber evidence="3">6.3.4.21</ecNumber>
    </recommendedName>
    <alternativeName>
        <fullName>Nicotinate phosphoribosyltransferase domain-containing protein 1</fullName>
    </alternativeName>
</protein>